<sequence length="436" mass="49591">MASLLPFVQTRSNTVNFFMRRSGPELWKTLTSVSKSGQKKGRRNTRQPVRPLNRFYRIGSSPMKIEFAGLNAPIRMRETENQNLMSIAEQTEDEIRDSMGGTKKILEERDTGKKKRNREKLHPMERGFSGTQLVGQKLGAPPPLDGVNFDDFETYCLEVKRTSNMTNVFGRVHTMSALVVTGNGRGLAGYAVGKAPIHRTTTAIINGMGMASRKLFHVELHEGRTIYQDFYAECRNTRVFAQRRPRGFGLTCHPRLIKICEAIGIKDIYVKVEGSTKNYLALTHAFVTGLLNQETHQQLAERKGLHVVEMSPSRHFLPQIVASPISTELKTEETLEALDRLNLDDFYGEGRYPLRKPKSLPFFSNLEGHLDARWRKHPFRNQESTMIRLIADNMVPRWTRDARAAWADQRNERMTTGVEPMPLGIGLSHVVPKKDD</sequence>
<dbReference type="EMBL" id="Z81053">
    <property type="protein sequence ID" value="CAB02879.2"/>
    <property type="molecule type" value="Genomic_DNA"/>
</dbReference>
<dbReference type="EMBL" id="Z78063">
    <property type="protein sequence ID" value="CAB02879.2"/>
    <property type="status" value="JOINED"/>
    <property type="molecule type" value="Genomic_DNA"/>
</dbReference>
<dbReference type="PIR" id="T20412">
    <property type="entry name" value="T20412"/>
</dbReference>
<dbReference type="RefSeq" id="NP_506145.2">
    <property type="nucleotide sequence ID" value="NM_073744.7"/>
</dbReference>
<dbReference type="SMR" id="Q93425"/>
<dbReference type="BioGRID" id="44741">
    <property type="interactions" value="4"/>
</dbReference>
<dbReference type="FunCoup" id="Q93425">
    <property type="interactions" value="1506"/>
</dbReference>
<dbReference type="STRING" id="6239.E02A10.1.1"/>
<dbReference type="PaxDb" id="6239-E02A10.1"/>
<dbReference type="PeptideAtlas" id="Q93425"/>
<dbReference type="EnsemblMetazoa" id="E02A10.1.1">
    <property type="protein sequence ID" value="E02A10.1.1"/>
    <property type="gene ID" value="WBGene00008452"/>
</dbReference>
<dbReference type="GeneID" id="179721"/>
<dbReference type="KEGG" id="cel:CELE_E02A10.1"/>
<dbReference type="UCSC" id="E02A10.1.1">
    <property type="organism name" value="c. elegans"/>
</dbReference>
<dbReference type="AGR" id="WB:WBGene00008452"/>
<dbReference type="CTD" id="179721"/>
<dbReference type="WormBase" id="E02A10.1">
    <property type="protein sequence ID" value="CE47787"/>
    <property type="gene ID" value="WBGene00008452"/>
    <property type="gene designation" value="mrps-5"/>
</dbReference>
<dbReference type="eggNOG" id="KOG2646">
    <property type="taxonomic scope" value="Eukaryota"/>
</dbReference>
<dbReference type="GeneTree" id="ENSGT00390000001878"/>
<dbReference type="HOGENOM" id="CLU_050434_1_0_1"/>
<dbReference type="InParanoid" id="Q93425"/>
<dbReference type="OMA" id="LICHRAI"/>
<dbReference type="OrthoDB" id="309483at2759"/>
<dbReference type="PhylomeDB" id="Q93425"/>
<dbReference type="Reactome" id="R-CEL-5389840">
    <property type="pathway name" value="Mitochondrial translation elongation"/>
</dbReference>
<dbReference type="Reactome" id="R-CEL-5419276">
    <property type="pathway name" value="Mitochondrial translation termination"/>
</dbReference>
<dbReference type="PRO" id="PR:Q93425"/>
<dbReference type="Proteomes" id="UP000001940">
    <property type="component" value="Chromosome V"/>
</dbReference>
<dbReference type="Bgee" id="WBGene00008452">
    <property type="expression patterns" value="Expressed in germ line (C elegans) and 4 other cell types or tissues"/>
</dbReference>
<dbReference type="GO" id="GO:0005763">
    <property type="term" value="C:mitochondrial small ribosomal subunit"/>
    <property type="evidence" value="ECO:0000250"/>
    <property type="project" value="UniProtKB"/>
</dbReference>
<dbReference type="GO" id="GO:0003723">
    <property type="term" value="F:RNA binding"/>
    <property type="evidence" value="ECO:0007669"/>
    <property type="project" value="InterPro"/>
</dbReference>
<dbReference type="GO" id="GO:0003735">
    <property type="term" value="F:structural constituent of ribosome"/>
    <property type="evidence" value="ECO:0000318"/>
    <property type="project" value="GO_Central"/>
</dbReference>
<dbReference type="GO" id="GO:0006412">
    <property type="term" value="P:translation"/>
    <property type="evidence" value="ECO:0000318"/>
    <property type="project" value="GO_Central"/>
</dbReference>
<dbReference type="FunFam" id="3.30.160.20:FF:000022">
    <property type="entry name" value="28S ribosomal protein S5, mitochondrial"/>
    <property type="match status" value="1"/>
</dbReference>
<dbReference type="FunFam" id="3.30.230.10:FF:000002">
    <property type="entry name" value="30S ribosomal protein S5"/>
    <property type="match status" value="1"/>
</dbReference>
<dbReference type="Gene3D" id="3.30.160.20">
    <property type="match status" value="1"/>
</dbReference>
<dbReference type="Gene3D" id="3.30.230.10">
    <property type="match status" value="1"/>
</dbReference>
<dbReference type="InterPro" id="IPR020568">
    <property type="entry name" value="Ribosomal_Su5_D2-typ_SF"/>
</dbReference>
<dbReference type="InterPro" id="IPR000851">
    <property type="entry name" value="Ribosomal_uS5"/>
</dbReference>
<dbReference type="InterPro" id="IPR005324">
    <property type="entry name" value="Ribosomal_uS5_C"/>
</dbReference>
<dbReference type="InterPro" id="IPR013810">
    <property type="entry name" value="Ribosomal_uS5_N"/>
</dbReference>
<dbReference type="InterPro" id="IPR018192">
    <property type="entry name" value="Ribosomal_uS5_N_CS"/>
</dbReference>
<dbReference type="InterPro" id="IPR048584">
    <property type="entry name" value="Ribosomal_uS5m_N"/>
</dbReference>
<dbReference type="InterPro" id="IPR014721">
    <property type="entry name" value="Ribsml_uS5_D2-typ_fold_subgr"/>
</dbReference>
<dbReference type="PANTHER" id="PTHR48277">
    <property type="entry name" value="MITOCHONDRIAL RIBOSOMAL PROTEIN S5"/>
    <property type="match status" value="1"/>
</dbReference>
<dbReference type="PANTHER" id="PTHR48277:SF1">
    <property type="entry name" value="MITOCHONDRIAL RIBOSOMAL PROTEIN S5"/>
    <property type="match status" value="1"/>
</dbReference>
<dbReference type="Pfam" id="PF00333">
    <property type="entry name" value="Ribosomal_S5"/>
    <property type="match status" value="1"/>
</dbReference>
<dbReference type="Pfam" id="PF03719">
    <property type="entry name" value="Ribosomal_S5_C"/>
    <property type="match status" value="1"/>
</dbReference>
<dbReference type="Pfam" id="PF21251">
    <property type="entry name" value="Ribosomal_uS5m_N"/>
    <property type="match status" value="1"/>
</dbReference>
<dbReference type="SUPFAM" id="SSF54768">
    <property type="entry name" value="dsRNA-binding domain-like"/>
    <property type="match status" value="1"/>
</dbReference>
<dbReference type="SUPFAM" id="SSF54211">
    <property type="entry name" value="Ribosomal protein S5 domain 2-like"/>
    <property type="match status" value="1"/>
</dbReference>
<dbReference type="PROSITE" id="PS00585">
    <property type="entry name" value="RIBOSOMAL_S5"/>
    <property type="match status" value="1"/>
</dbReference>
<dbReference type="PROSITE" id="PS50881">
    <property type="entry name" value="S5_DSRBD"/>
    <property type="match status" value="1"/>
</dbReference>
<accession>Q93425</accession>
<accession>O01021</accession>
<accession>O02489</accession>
<organism>
    <name type="scientific">Caenorhabditis elegans</name>
    <dbReference type="NCBI Taxonomy" id="6239"/>
    <lineage>
        <taxon>Eukaryota</taxon>
        <taxon>Metazoa</taxon>
        <taxon>Ecdysozoa</taxon>
        <taxon>Nematoda</taxon>
        <taxon>Chromadorea</taxon>
        <taxon>Rhabditida</taxon>
        <taxon>Rhabditina</taxon>
        <taxon>Rhabditomorpha</taxon>
        <taxon>Rhabditoidea</taxon>
        <taxon>Rhabditidae</taxon>
        <taxon>Peloderinae</taxon>
        <taxon>Caenorhabditis</taxon>
    </lineage>
</organism>
<comment type="subunit">
    <text evidence="1">Component of the mitochondrial ribosome small subunit (28S) which comprises a 12S rRNA and about 30 distinct proteins.</text>
</comment>
<comment type="subcellular location">
    <subcellularLocation>
        <location evidence="1">Mitochondrion</location>
    </subcellularLocation>
</comment>
<comment type="similarity">
    <text evidence="4">Belongs to the universal ribosomal protein uS5 family.</text>
</comment>
<gene>
    <name type="primary">mrps-5</name>
    <name type="ORF">E02A10.1</name>
</gene>
<feature type="chain" id="PRO_0000131689" description="Small ribosomal subunit protein uS5m">
    <location>
        <begin position="1"/>
        <end position="436"/>
    </location>
</feature>
<feature type="domain" description="S5 DRBM" evidence="2">
    <location>
        <begin position="152"/>
        <end position="218"/>
    </location>
</feature>
<feature type="region of interest" description="Disordered" evidence="3">
    <location>
        <begin position="417"/>
        <end position="436"/>
    </location>
</feature>
<reference key="1">
    <citation type="journal article" date="1998" name="Science">
        <title>Genome sequence of the nematode C. elegans: a platform for investigating biology.</title>
        <authorList>
            <consortium name="The C. elegans sequencing consortium"/>
        </authorList>
    </citation>
    <scope>NUCLEOTIDE SEQUENCE [LARGE SCALE GENOMIC DNA]</scope>
    <source>
        <strain>Bristol N2</strain>
    </source>
</reference>
<keyword id="KW-0496">Mitochondrion</keyword>
<keyword id="KW-1185">Reference proteome</keyword>
<keyword id="KW-0687">Ribonucleoprotein</keyword>
<keyword id="KW-0689">Ribosomal protein</keyword>
<name>RT05_CAEEL</name>
<proteinExistence type="inferred from homology"/>
<protein>
    <recommendedName>
        <fullName evidence="4">Small ribosomal subunit protein uS5m</fullName>
    </recommendedName>
    <alternativeName>
        <fullName evidence="4">28S ribosomal protein S5, mitochondrial</fullName>
    </alternativeName>
</protein>
<evidence type="ECO:0000250" key="1">
    <source>
        <dbReference type="UniProtKB" id="P82675"/>
    </source>
</evidence>
<evidence type="ECO:0000255" key="2">
    <source>
        <dbReference type="PROSITE-ProRule" id="PRU00268"/>
    </source>
</evidence>
<evidence type="ECO:0000256" key="3">
    <source>
        <dbReference type="SAM" id="MobiDB-lite"/>
    </source>
</evidence>
<evidence type="ECO:0000305" key="4"/>